<accession>C5BP61</accession>
<sequence>MATILVLHGPNLNLLGTREPEIYGRETLADIDQKLMTLCLERGHHLHFLQSNAEYELIDRIHDARREGVNFIVINPAAFTHTSVALRDALAGVGIPFVECHLSNVFSREAFRHHSYFSDIAVGVVCGFGSQSYELALQAAFNYLDKNKPEQKHS</sequence>
<feature type="chain" id="PRO_1000203678" description="3-dehydroquinate dehydratase">
    <location>
        <begin position="1"/>
        <end position="154"/>
    </location>
</feature>
<feature type="active site" description="Proton acceptor" evidence="1">
    <location>
        <position position="23"/>
    </location>
</feature>
<feature type="active site" description="Proton donor" evidence="1">
    <location>
        <position position="101"/>
    </location>
</feature>
<feature type="binding site" evidence="1">
    <location>
        <position position="75"/>
    </location>
    <ligand>
        <name>substrate</name>
    </ligand>
</feature>
<feature type="binding site" evidence="1">
    <location>
        <position position="81"/>
    </location>
    <ligand>
        <name>substrate</name>
    </ligand>
</feature>
<feature type="binding site" evidence="1">
    <location>
        <position position="88"/>
    </location>
    <ligand>
        <name>substrate</name>
    </ligand>
</feature>
<feature type="binding site" evidence="1">
    <location>
        <begin position="102"/>
        <end position="103"/>
    </location>
    <ligand>
        <name>substrate</name>
    </ligand>
</feature>
<feature type="binding site" evidence="1">
    <location>
        <position position="112"/>
    </location>
    <ligand>
        <name>substrate</name>
    </ligand>
</feature>
<feature type="site" description="Transition state stabilizer" evidence="1">
    <location>
        <position position="18"/>
    </location>
</feature>
<name>AROQ_TERTT</name>
<reference key="1">
    <citation type="journal article" date="2009" name="PLoS ONE">
        <title>The complete genome of Teredinibacter turnerae T7901: an intracellular endosymbiont of marine wood-boring bivalves (shipworms).</title>
        <authorList>
            <person name="Yang J.C."/>
            <person name="Madupu R."/>
            <person name="Durkin A.S."/>
            <person name="Ekborg N.A."/>
            <person name="Pedamallu C.S."/>
            <person name="Hostetler J.B."/>
            <person name="Radune D."/>
            <person name="Toms B.S."/>
            <person name="Henrissat B."/>
            <person name="Coutinho P.M."/>
            <person name="Schwarz S."/>
            <person name="Field L."/>
            <person name="Trindade-Silva A.E."/>
            <person name="Soares C.A.G."/>
            <person name="Elshahawi S."/>
            <person name="Hanora A."/>
            <person name="Schmidt E.W."/>
            <person name="Haygood M.G."/>
            <person name="Posfai J."/>
            <person name="Benner J."/>
            <person name="Madinger C."/>
            <person name="Nove J."/>
            <person name="Anton B."/>
            <person name="Chaudhary K."/>
            <person name="Foster J."/>
            <person name="Holman A."/>
            <person name="Kumar S."/>
            <person name="Lessard P.A."/>
            <person name="Luyten Y.A."/>
            <person name="Slatko B."/>
            <person name="Wood N."/>
            <person name="Wu B."/>
            <person name="Teplitski M."/>
            <person name="Mougous J.D."/>
            <person name="Ward N."/>
            <person name="Eisen J.A."/>
            <person name="Badger J.H."/>
            <person name="Distel D.L."/>
        </authorList>
    </citation>
    <scope>NUCLEOTIDE SEQUENCE [LARGE SCALE GENOMIC DNA]</scope>
    <source>
        <strain>ATCC 39867 / T7901</strain>
    </source>
</reference>
<proteinExistence type="inferred from homology"/>
<evidence type="ECO:0000255" key="1">
    <source>
        <dbReference type="HAMAP-Rule" id="MF_00169"/>
    </source>
</evidence>
<organism>
    <name type="scientific">Teredinibacter turnerae (strain ATCC 39867 / T7901)</name>
    <dbReference type="NCBI Taxonomy" id="377629"/>
    <lineage>
        <taxon>Bacteria</taxon>
        <taxon>Pseudomonadati</taxon>
        <taxon>Pseudomonadota</taxon>
        <taxon>Gammaproteobacteria</taxon>
        <taxon>Cellvibrionales</taxon>
        <taxon>Cellvibrionaceae</taxon>
        <taxon>Teredinibacter</taxon>
    </lineage>
</organism>
<dbReference type="EC" id="4.2.1.10" evidence="1"/>
<dbReference type="EMBL" id="CP001614">
    <property type="protein sequence ID" value="ACR14185.1"/>
    <property type="molecule type" value="Genomic_DNA"/>
</dbReference>
<dbReference type="RefSeq" id="WP_015820301.1">
    <property type="nucleotide sequence ID" value="NC_012997.1"/>
</dbReference>
<dbReference type="SMR" id="C5BP61"/>
<dbReference type="STRING" id="377629.TERTU_3078"/>
<dbReference type="KEGG" id="ttu:TERTU_3078"/>
<dbReference type="eggNOG" id="COG0757">
    <property type="taxonomic scope" value="Bacteria"/>
</dbReference>
<dbReference type="HOGENOM" id="CLU_090968_1_0_6"/>
<dbReference type="OrthoDB" id="9790793at2"/>
<dbReference type="UniPathway" id="UPA00053">
    <property type="reaction ID" value="UER00086"/>
</dbReference>
<dbReference type="Proteomes" id="UP000009080">
    <property type="component" value="Chromosome"/>
</dbReference>
<dbReference type="GO" id="GO:0003855">
    <property type="term" value="F:3-dehydroquinate dehydratase activity"/>
    <property type="evidence" value="ECO:0007669"/>
    <property type="project" value="UniProtKB-UniRule"/>
</dbReference>
<dbReference type="GO" id="GO:0008652">
    <property type="term" value="P:amino acid biosynthetic process"/>
    <property type="evidence" value="ECO:0007669"/>
    <property type="project" value="UniProtKB-KW"/>
</dbReference>
<dbReference type="GO" id="GO:0009073">
    <property type="term" value="P:aromatic amino acid family biosynthetic process"/>
    <property type="evidence" value="ECO:0007669"/>
    <property type="project" value="UniProtKB-KW"/>
</dbReference>
<dbReference type="GO" id="GO:0009423">
    <property type="term" value="P:chorismate biosynthetic process"/>
    <property type="evidence" value="ECO:0007669"/>
    <property type="project" value="UniProtKB-UniRule"/>
</dbReference>
<dbReference type="GO" id="GO:0019631">
    <property type="term" value="P:quinate catabolic process"/>
    <property type="evidence" value="ECO:0007669"/>
    <property type="project" value="TreeGrafter"/>
</dbReference>
<dbReference type="CDD" id="cd00466">
    <property type="entry name" value="DHQase_II"/>
    <property type="match status" value="1"/>
</dbReference>
<dbReference type="Gene3D" id="3.40.50.9100">
    <property type="entry name" value="Dehydroquinase, class II"/>
    <property type="match status" value="1"/>
</dbReference>
<dbReference type="HAMAP" id="MF_00169">
    <property type="entry name" value="AroQ"/>
    <property type="match status" value="1"/>
</dbReference>
<dbReference type="InterPro" id="IPR001874">
    <property type="entry name" value="DHquinase_II"/>
</dbReference>
<dbReference type="InterPro" id="IPR018509">
    <property type="entry name" value="DHquinase_II_CS"/>
</dbReference>
<dbReference type="InterPro" id="IPR036441">
    <property type="entry name" value="DHquinase_II_sf"/>
</dbReference>
<dbReference type="NCBIfam" id="TIGR01088">
    <property type="entry name" value="aroQ"/>
    <property type="match status" value="1"/>
</dbReference>
<dbReference type="NCBIfam" id="NF003804">
    <property type="entry name" value="PRK05395.1-1"/>
    <property type="match status" value="1"/>
</dbReference>
<dbReference type="NCBIfam" id="NF003805">
    <property type="entry name" value="PRK05395.1-2"/>
    <property type="match status" value="1"/>
</dbReference>
<dbReference type="NCBIfam" id="NF003806">
    <property type="entry name" value="PRK05395.1-3"/>
    <property type="match status" value="1"/>
</dbReference>
<dbReference type="NCBIfam" id="NF003807">
    <property type="entry name" value="PRK05395.1-4"/>
    <property type="match status" value="1"/>
</dbReference>
<dbReference type="PANTHER" id="PTHR21272">
    <property type="entry name" value="CATABOLIC 3-DEHYDROQUINASE"/>
    <property type="match status" value="1"/>
</dbReference>
<dbReference type="PANTHER" id="PTHR21272:SF3">
    <property type="entry name" value="CATABOLIC 3-DEHYDROQUINASE"/>
    <property type="match status" value="1"/>
</dbReference>
<dbReference type="Pfam" id="PF01220">
    <property type="entry name" value="DHquinase_II"/>
    <property type="match status" value="1"/>
</dbReference>
<dbReference type="PIRSF" id="PIRSF001399">
    <property type="entry name" value="DHquinase_II"/>
    <property type="match status" value="1"/>
</dbReference>
<dbReference type="SUPFAM" id="SSF52304">
    <property type="entry name" value="Type II 3-dehydroquinate dehydratase"/>
    <property type="match status" value="1"/>
</dbReference>
<dbReference type="PROSITE" id="PS01029">
    <property type="entry name" value="DEHYDROQUINASE_II"/>
    <property type="match status" value="1"/>
</dbReference>
<gene>
    <name evidence="1" type="primary">aroQ</name>
    <name type="ordered locus">TERTU_3078</name>
</gene>
<comment type="function">
    <text evidence="1">Catalyzes a trans-dehydration via an enolate intermediate.</text>
</comment>
<comment type="catalytic activity">
    <reaction evidence="1">
        <text>3-dehydroquinate = 3-dehydroshikimate + H2O</text>
        <dbReference type="Rhea" id="RHEA:21096"/>
        <dbReference type="ChEBI" id="CHEBI:15377"/>
        <dbReference type="ChEBI" id="CHEBI:16630"/>
        <dbReference type="ChEBI" id="CHEBI:32364"/>
        <dbReference type="EC" id="4.2.1.10"/>
    </reaction>
</comment>
<comment type="pathway">
    <text evidence="1">Metabolic intermediate biosynthesis; chorismate biosynthesis; chorismate from D-erythrose 4-phosphate and phosphoenolpyruvate: step 3/7.</text>
</comment>
<comment type="subunit">
    <text evidence="1">Homododecamer.</text>
</comment>
<comment type="similarity">
    <text evidence="1">Belongs to the type-II 3-dehydroquinase family.</text>
</comment>
<protein>
    <recommendedName>
        <fullName evidence="1">3-dehydroquinate dehydratase</fullName>
        <shortName evidence="1">3-dehydroquinase</shortName>
        <ecNumber evidence="1">4.2.1.10</ecNumber>
    </recommendedName>
    <alternativeName>
        <fullName evidence="1">Type II DHQase</fullName>
    </alternativeName>
</protein>
<keyword id="KW-0028">Amino-acid biosynthesis</keyword>
<keyword id="KW-0057">Aromatic amino acid biosynthesis</keyword>
<keyword id="KW-0456">Lyase</keyword>
<keyword id="KW-1185">Reference proteome</keyword>